<feature type="chain" id="PRO_0000176683" description="Large ribosomal subunit protein bL9">
    <location>
        <begin position="1"/>
        <end position="148"/>
    </location>
</feature>
<proteinExistence type="inferred from homology"/>
<evidence type="ECO:0000255" key="1">
    <source>
        <dbReference type="HAMAP-Rule" id="MF_00503"/>
    </source>
</evidence>
<evidence type="ECO:0000305" key="2"/>
<name>RL9_STAHJ</name>
<gene>
    <name evidence="1" type="primary">rplI</name>
    <name type="ordered locus">SH0014</name>
</gene>
<dbReference type="EMBL" id="AP006716">
    <property type="protein sequence ID" value="BAE03323.1"/>
    <property type="molecule type" value="Genomic_DNA"/>
</dbReference>
<dbReference type="RefSeq" id="WP_011274372.1">
    <property type="nucleotide sequence ID" value="NC_007168.1"/>
</dbReference>
<dbReference type="SMR" id="Q4LAK2"/>
<dbReference type="KEGG" id="sha:SH0014"/>
<dbReference type="eggNOG" id="COG0359">
    <property type="taxonomic scope" value="Bacteria"/>
</dbReference>
<dbReference type="HOGENOM" id="CLU_078938_3_2_9"/>
<dbReference type="OrthoDB" id="9788336at2"/>
<dbReference type="Proteomes" id="UP000000543">
    <property type="component" value="Chromosome"/>
</dbReference>
<dbReference type="GO" id="GO:1990904">
    <property type="term" value="C:ribonucleoprotein complex"/>
    <property type="evidence" value="ECO:0007669"/>
    <property type="project" value="UniProtKB-KW"/>
</dbReference>
<dbReference type="GO" id="GO:0005840">
    <property type="term" value="C:ribosome"/>
    <property type="evidence" value="ECO:0007669"/>
    <property type="project" value="UniProtKB-KW"/>
</dbReference>
<dbReference type="GO" id="GO:0019843">
    <property type="term" value="F:rRNA binding"/>
    <property type="evidence" value="ECO:0007669"/>
    <property type="project" value="UniProtKB-UniRule"/>
</dbReference>
<dbReference type="GO" id="GO:0003735">
    <property type="term" value="F:structural constituent of ribosome"/>
    <property type="evidence" value="ECO:0007669"/>
    <property type="project" value="InterPro"/>
</dbReference>
<dbReference type="GO" id="GO:0006412">
    <property type="term" value="P:translation"/>
    <property type="evidence" value="ECO:0007669"/>
    <property type="project" value="UniProtKB-UniRule"/>
</dbReference>
<dbReference type="FunFam" id="3.10.430.100:FF:000002">
    <property type="entry name" value="50S ribosomal protein L9"/>
    <property type="match status" value="1"/>
</dbReference>
<dbReference type="FunFam" id="3.40.5.10:FF:000002">
    <property type="entry name" value="50S ribosomal protein L9"/>
    <property type="match status" value="1"/>
</dbReference>
<dbReference type="Gene3D" id="3.10.430.100">
    <property type="entry name" value="Ribosomal protein L9, C-terminal domain"/>
    <property type="match status" value="1"/>
</dbReference>
<dbReference type="Gene3D" id="3.40.5.10">
    <property type="entry name" value="Ribosomal protein L9, N-terminal domain"/>
    <property type="match status" value="1"/>
</dbReference>
<dbReference type="HAMAP" id="MF_00503">
    <property type="entry name" value="Ribosomal_bL9"/>
    <property type="match status" value="1"/>
</dbReference>
<dbReference type="InterPro" id="IPR000244">
    <property type="entry name" value="Ribosomal_bL9"/>
</dbReference>
<dbReference type="InterPro" id="IPR009027">
    <property type="entry name" value="Ribosomal_bL9/RNase_H1_N"/>
</dbReference>
<dbReference type="InterPro" id="IPR020594">
    <property type="entry name" value="Ribosomal_bL9_bac/chp"/>
</dbReference>
<dbReference type="InterPro" id="IPR020069">
    <property type="entry name" value="Ribosomal_bL9_C"/>
</dbReference>
<dbReference type="InterPro" id="IPR036791">
    <property type="entry name" value="Ribosomal_bL9_C_sf"/>
</dbReference>
<dbReference type="InterPro" id="IPR020070">
    <property type="entry name" value="Ribosomal_bL9_N"/>
</dbReference>
<dbReference type="InterPro" id="IPR036935">
    <property type="entry name" value="Ribosomal_bL9_N_sf"/>
</dbReference>
<dbReference type="NCBIfam" id="TIGR00158">
    <property type="entry name" value="L9"/>
    <property type="match status" value="1"/>
</dbReference>
<dbReference type="PANTHER" id="PTHR21368">
    <property type="entry name" value="50S RIBOSOMAL PROTEIN L9"/>
    <property type="match status" value="1"/>
</dbReference>
<dbReference type="Pfam" id="PF03948">
    <property type="entry name" value="Ribosomal_L9_C"/>
    <property type="match status" value="1"/>
</dbReference>
<dbReference type="Pfam" id="PF01281">
    <property type="entry name" value="Ribosomal_L9_N"/>
    <property type="match status" value="1"/>
</dbReference>
<dbReference type="SUPFAM" id="SSF55658">
    <property type="entry name" value="L9 N-domain-like"/>
    <property type="match status" value="1"/>
</dbReference>
<dbReference type="SUPFAM" id="SSF55653">
    <property type="entry name" value="Ribosomal protein L9 C-domain"/>
    <property type="match status" value="1"/>
</dbReference>
<dbReference type="PROSITE" id="PS00651">
    <property type="entry name" value="RIBOSOMAL_L9"/>
    <property type="match status" value="1"/>
</dbReference>
<accession>Q4LAK2</accession>
<organism>
    <name type="scientific">Staphylococcus haemolyticus (strain JCSC1435)</name>
    <dbReference type="NCBI Taxonomy" id="279808"/>
    <lineage>
        <taxon>Bacteria</taxon>
        <taxon>Bacillati</taxon>
        <taxon>Bacillota</taxon>
        <taxon>Bacilli</taxon>
        <taxon>Bacillales</taxon>
        <taxon>Staphylococcaceae</taxon>
        <taxon>Staphylococcus</taxon>
    </lineage>
</organism>
<reference key="1">
    <citation type="journal article" date="2005" name="J. Bacteriol.">
        <title>Whole-genome sequencing of Staphylococcus haemolyticus uncovers the extreme plasticity of its genome and the evolution of human-colonizing staphylococcal species.</title>
        <authorList>
            <person name="Takeuchi F."/>
            <person name="Watanabe S."/>
            <person name="Baba T."/>
            <person name="Yuzawa H."/>
            <person name="Ito T."/>
            <person name="Morimoto Y."/>
            <person name="Kuroda M."/>
            <person name="Cui L."/>
            <person name="Takahashi M."/>
            <person name="Ankai A."/>
            <person name="Baba S."/>
            <person name="Fukui S."/>
            <person name="Lee J.C."/>
            <person name="Hiramatsu K."/>
        </authorList>
    </citation>
    <scope>NUCLEOTIDE SEQUENCE [LARGE SCALE GENOMIC DNA]</scope>
    <source>
        <strain>JCSC1435</strain>
    </source>
</reference>
<comment type="function">
    <text evidence="1">Binds to the 23S rRNA.</text>
</comment>
<comment type="similarity">
    <text evidence="1">Belongs to the bacterial ribosomal protein bL9 family.</text>
</comment>
<protein>
    <recommendedName>
        <fullName evidence="1">Large ribosomal subunit protein bL9</fullName>
    </recommendedName>
    <alternativeName>
        <fullName evidence="2">50S ribosomal protein L9</fullName>
    </alternativeName>
</protein>
<sequence length="148" mass="16427">MKVIFTQDVKGKGKKGEIKDVPVGYANNFLIKNNYAVEATPGNLKQLEQQNKRAEADRQKEIDDAKALKSKLEEIEVEVSAKTGEGGKLFGSVSTKQIAEALKTQHDIKIDKRKMDLPQGIHALGYTNVPVKLDKEVEGTIRVHTVEK</sequence>
<keyword id="KW-0687">Ribonucleoprotein</keyword>
<keyword id="KW-0689">Ribosomal protein</keyword>
<keyword id="KW-0694">RNA-binding</keyword>
<keyword id="KW-0699">rRNA-binding</keyword>